<comment type="function">
    <text evidence="1">One of the primary rRNA binding proteins, it binds directly to 16S rRNA where it nucleates assembly of the head domain of the 30S subunit. Is located at the subunit interface close to the decoding center, probably blocks exit of the E-site tRNA.</text>
</comment>
<comment type="subunit">
    <text evidence="1">Part of the 30S ribosomal subunit. Contacts proteins S9 and S11.</text>
</comment>
<comment type="similarity">
    <text evidence="1">Belongs to the universal ribosomal protein uS7 family.</text>
</comment>
<keyword id="KW-1185">Reference proteome</keyword>
<keyword id="KW-0687">Ribonucleoprotein</keyword>
<keyword id="KW-0689">Ribosomal protein</keyword>
<keyword id="KW-0694">RNA-binding</keyword>
<keyword id="KW-0699">rRNA-binding</keyword>
<keyword id="KW-0820">tRNA-binding</keyword>
<sequence length="156" mass="17740">MPRRREVAKRVILPDPKYADRVVAKLINIIMLDGKKSTAEKALYGAMEIAAGKAGEEPVKVLKKCLDNIKPMLEVKSRRVGGSTYQVPVEVRPERRVSLAMRWLVKYSNTRSEKTVTDKLAGEILDAYNNRGSAVKKREDTHKMAEANRAFAHYRW</sequence>
<dbReference type="EMBL" id="CP001124">
    <property type="protein sequence ID" value="ACH37950.1"/>
    <property type="molecule type" value="Genomic_DNA"/>
</dbReference>
<dbReference type="RefSeq" id="WP_012529362.1">
    <property type="nucleotide sequence ID" value="NC_011146.1"/>
</dbReference>
<dbReference type="SMR" id="B5EFP6"/>
<dbReference type="STRING" id="404380.Gbem_0929"/>
<dbReference type="KEGG" id="gbm:Gbem_0929"/>
<dbReference type="eggNOG" id="COG0049">
    <property type="taxonomic scope" value="Bacteria"/>
</dbReference>
<dbReference type="HOGENOM" id="CLU_072226_1_1_7"/>
<dbReference type="OrthoDB" id="9807653at2"/>
<dbReference type="Proteomes" id="UP000008825">
    <property type="component" value="Chromosome"/>
</dbReference>
<dbReference type="GO" id="GO:0015935">
    <property type="term" value="C:small ribosomal subunit"/>
    <property type="evidence" value="ECO:0007669"/>
    <property type="project" value="InterPro"/>
</dbReference>
<dbReference type="GO" id="GO:0019843">
    <property type="term" value="F:rRNA binding"/>
    <property type="evidence" value="ECO:0007669"/>
    <property type="project" value="UniProtKB-UniRule"/>
</dbReference>
<dbReference type="GO" id="GO:0003735">
    <property type="term" value="F:structural constituent of ribosome"/>
    <property type="evidence" value="ECO:0007669"/>
    <property type="project" value="InterPro"/>
</dbReference>
<dbReference type="GO" id="GO:0000049">
    <property type="term" value="F:tRNA binding"/>
    <property type="evidence" value="ECO:0007669"/>
    <property type="project" value="UniProtKB-UniRule"/>
</dbReference>
<dbReference type="GO" id="GO:0006412">
    <property type="term" value="P:translation"/>
    <property type="evidence" value="ECO:0007669"/>
    <property type="project" value="UniProtKB-UniRule"/>
</dbReference>
<dbReference type="CDD" id="cd14869">
    <property type="entry name" value="uS7_Bacteria"/>
    <property type="match status" value="1"/>
</dbReference>
<dbReference type="FunFam" id="1.10.455.10:FF:000001">
    <property type="entry name" value="30S ribosomal protein S7"/>
    <property type="match status" value="1"/>
</dbReference>
<dbReference type="Gene3D" id="1.10.455.10">
    <property type="entry name" value="Ribosomal protein S7 domain"/>
    <property type="match status" value="1"/>
</dbReference>
<dbReference type="HAMAP" id="MF_00480_B">
    <property type="entry name" value="Ribosomal_uS7_B"/>
    <property type="match status" value="1"/>
</dbReference>
<dbReference type="InterPro" id="IPR000235">
    <property type="entry name" value="Ribosomal_uS7"/>
</dbReference>
<dbReference type="InterPro" id="IPR005717">
    <property type="entry name" value="Ribosomal_uS7_bac/org-type"/>
</dbReference>
<dbReference type="InterPro" id="IPR023798">
    <property type="entry name" value="Ribosomal_uS7_dom"/>
</dbReference>
<dbReference type="InterPro" id="IPR036823">
    <property type="entry name" value="Ribosomal_uS7_dom_sf"/>
</dbReference>
<dbReference type="NCBIfam" id="TIGR01029">
    <property type="entry name" value="rpsG_bact"/>
    <property type="match status" value="1"/>
</dbReference>
<dbReference type="PANTHER" id="PTHR11205">
    <property type="entry name" value="RIBOSOMAL PROTEIN S7"/>
    <property type="match status" value="1"/>
</dbReference>
<dbReference type="Pfam" id="PF00177">
    <property type="entry name" value="Ribosomal_S7"/>
    <property type="match status" value="1"/>
</dbReference>
<dbReference type="PIRSF" id="PIRSF002122">
    <property type="entry name" value="RPS7p_RPS7a_RPS5e_RPS7o"/>
    <property type="match status" value="1"/>
</dbReference>
<dbReference type="SUPFAM" id="SSF47973">
    <property type="entry name" value="Ribosomal protein S7"/>
    <property type="match status" value="1"/>
</dbReference>
<protein>
    <recommendedName>
        <fullName evidence="1">Small ribosomal subunit protein uS7</fullName>
    </recommendedName>
    <alternativeName>
        <fullName evidence="2">30S ribosomal protein S7</fullName>
    </alternativeName>
</protein>
<gene>
    <name evidence="1" type="primary">rpsG</name>
    <name type="ordered locus">Gbem_0929</name>
</gene>
<evidence type="ECO:0000255" key="1">
    <source>
        <dbReference type="HAMAP-Rule" id="MF_00480"/>
    </source>
</evidence>
<evidence type="ECO:0000305" key="2"/>
<name>RS7_CITBB</name>
<organism>
    <name type="scientific">Citrifermentans bemidjiense (strain ATCC BAA-1014 / DSM 16622 / JCM 12645 / Bem)</name>
    <name type="common">Geobacter bemidjiensis</name>
    <dbReference type="NCBI Taxonomy" id="404380"/>
    <lineage>
        <taxon>Bacteria</taxon>
        <taxon>Pseudomonadati</taxon>
        <taxon>Thermodesulfobacteriota</taxon>
        <taxon>Desulfuromonadia</taxon>
        <taxon>Geobacterales</taxon>
        <taxon>Geobacteraceae</taxon>
        <taxon>Citrifermentans</taxon>
    </lineage>
</organism>
<proteinExistence type="inferred from homology"/>
<accession>B5EFP6</accession>
<feature type="chain" id="PRO_1000125951" description="Small ribosomal subunit protein uS7">
    <location>
        <begin position="1"/>
        <end position="156"/>
    </location>
</feature>
<reference key="1">
    <citation type="submission" date="2008-07" db="EMBL/GenBank/DDBJ databases">
        <title>Complete sequence of Geobacter bemidjiensis BEM.</title>
        <authorList>
            <consortium name="US DOE Joint Genome Institute"/>
            <person name="Lucas S."/>
            <person name="Copeland A."/>
            <person name="Lapidus A."/>
            <person name="Glavina del Rio T."/>
            <person name="Dalin E."/>
            <person name="Tice H."/>
            <person name="Bruce D."/>
            <person name="Goodwin L."/>
            <person name="Pitluck S."/>
            <person name="Kiss H."/>
            <person name="Brettin T."/>
            <person name="Detter J.C."/>
            <person name="Han C."/>
            <person name="Kuske C.R."/>
            <person name="Schmutz J."/>
            <person name="Larimer F."/>
            <person name="Land M."/>
            <person name="Hauser L."/>
            <person name="Kyrpides N."/>
            <person name="Lykidis A."/>
            <person name="Lovley D."/>
            <person name="Richardson P."/>
        </authorList>
    </citation>
    <scope>NUCLEOTIDE SEQUENCE [LARGE SCALE GENOMIC DNA]</scope>
    <source>
        <strain>ATCC BAA-1014 / DSM 16622 / JCM 12645 / Bem</strain>
    </source>
</reference>